<accession>P0DG60</accession>
<accession>P67597</accession>
<accession>Q8NYZ2</accession>
<feature type="chain" id="PRO_0000136693" description="Tryptophan--tRNA ligase">
    <location>
        <begin position="1"/>
        <end position="340"/>
    </location>
</feature>
<feature type="short sequence motif" description="'HIGH' region" evidence="1">
    <location>
        <begin position="12"/>
        <end position="20"/>
    </location>
</feature>
<feature type="short sequence motif" description="'KMSKS' region" evidence="1">
    <location>
        <begin position="202"/>
        <end position="206"/>
    </location>
</feature>
<feature type="binding site" evidence="1">
    <location>
        <begin position="11"/>
        <end position="13"/>
    </location>
    <ligand>
        <name>ATP</name>
        <dbReference type="ChEBI" id="CHEBI:30616"/>
    </ligand>
</feature>
<feature type="binding site" evidence="1">
    <location>
        <begin position="19"/>
        <end position="20"/>
    </location>
    <ligand>
        <name>ATP</name>
        <dbReference type="ChEBI" id="CHEBI:30616"/>
    </ligand>
</feature>
<feature type="binding site" evidence="1">
    <location>
        <position position="140"/>
    </location>
    <ligand>
        <name>L-tryptophan</name>
        <dbReference type="ChEBI" id="CHEBI:57912"/>
    </ligand>
</feature>
<feature type="binding site" evidence="1">
    <location>
        <begin position="152"/>
        <end position="154"/>
    </location>
    <ligand>
        <name>ATP</name>
        <dbReference type="ChEBI" id="CHEBI:30616"/>
    </ligand>
</feature>
<feature type="binding site" evidence="1">
    <location>
        <position position="194"/>
    </location>
    <ligand>
        <name>ATP</name>
        <dbReference type="ChEBI" id="CHEBI:30616"/>
    </ligand>
</feature>
<feature type="binding site" evidence="1">
    <location>
        <begin position="202"/>
        <end position="206"/>
    </location>
    <ligand>
        <name>ATP</name>
        <dbReference type="ChEBI" id="CHEBI:30616"/>
    </ligand>
</feature>
<evidence type="ECO:0000255" key="1">
    <source>
        <dbReference type="HAMAP-Rule" id="MF_00140"/>
    </source>
</evidence>
<proteinExistence type="inferred from homology"/>
<dbReference type="EC" id="6.1.1.2" evidence="1"/>
<dbReference type="EMBL" id="AE014074">
    <property type="protein sequence ID" value="AAM80465.1"/>
    <property type="molecule type" value="Genomic_DNA"/>
</dbReference>
<dbReference type="RefSeq" id="WP_002991455.1">
    <property type="nucleotide sequence ID" value="NC_004070.1"/>
</dbReference>
<dbReference type="SMR" id="P0DG60"/>
<dbReference type="GeneID" id="69901625"/>
<dbReference type="KEGG" id="spg:SpyM3_1858"/>
<dbReference type="HOGENOM" id="CLU_029244_0_1_9"/>
<dbReference type="Proteomes" id="UP000000564">
    <property type="component" value="Chromosome"/>
</dbReference>
<dbReference type="GO" id="GO:0005829">
    <property type="term" value="C:cytosol"/>
    <property type="evidence" value="ECO:0007669"/>
    <property type="project" value="TreeGrafter"/>
</dbReference>
<dbReference type="GO" id="GO:0005524">
    <property type="term" value="F:ATP binding"/>
    <property type="evidence" value="ECO:0007669"/>
    <property type="project" value="UniProtKB-UniRule"/>
</dbReference>
<dbReference type="GO" id="GO:0004830">
    <property type="term" value="F:tryptophan-tRNA ligase activity"/>
    <property type="evidence" value="ECO:0007669"/>
    <property type="project" value="UniProtKB-UniRule"/>
</dbReference>
<dbReference type="GO" id="GO:0006436">
    <property type="term" value="P:tryptophanyl-tRNA aminoacylation"/>
    <property type="evidence" value="ECO:0007669"/>
    <property type="project" value="UniProtKB-UniRule"/>
</dbReference>
<dbReference type="CDD" id="cd00806">
    <property type="entry name" value="TrpRS_core"/>
    <property type="match status" value="1"/>
</dbReference>
<dbReference type="FunFam" id="1.10.240.10:FF:000005">
    <property type="entry name" value="Tryptophan--tRNA ligase"/>
    <property type="match status" value="1"/>
</dbReference>
<dbReference type="FunFam" id="3.40.50.620:FF:000094">
    <property type="entry name" value="Tryptophan--tRNA ligase"/>
    <property type="match status" value="1"/>
</dbReference>
<dbReference type="Gene3D" id="3.40.50.620">
    <property type="entry name" value="HUPs"/>
    <property type="match status" value="1"/>
</dbReference>
<dbReference type="Gene3D" id="1.10.240.10">
    <property type="entry name" value="Tyrosyl-Transfer RNA Synthetase"/>
    <property type="match status" value="1"/>
</dbReference>
<dbReference type="HAMAP" id="MF_00140_B">
    <property type="entry name" value="Trp_tRNA_synth_B"/>
    <property type="match status" value="1"/>
</dbReference>
<dbReference type="InterPro" id="IPR001412">
    <property type="entry name" value="aa-tRNA-synth_I_CS"/>
</dbReference>
<dbReference type="InterPro" id="IPR002305">
    <property type="entry name" value="aa-tRNA-synth_Ic"/>
</dbReference>
<dbReference type="InterPro" id="IPR014729">
    <property type="entry name" value="Rossmann-like_a/b/a_fold"/>
</dbReference>
<dbReference type="InterPro" id="IPR002306">
    <property type="entry name" value="Trp-tRNA-ligase"/>
</dbReference>
<dbReference type="InterPro" id="IPR024109">
    <property type="entry name" value="Trp-tRNA-ligase_bac-type"/>
</dbReference>
<dbReference type="InterPro" id="IPR050203">
    <property type="entry name" value="Trp-tRNA_synthetase"/>
</dbReference>
<dbReference type="NCBIfam" id="TIGR00233">
    <property type="entry name" value="trpS"/>
    <property type="match status" value="1"/>
</dbReference>
<dbReference type="PANTHER" id="PTHR43766">
    <property type="entry name" value="TRYPTOPHAN--TRNA LIGASE, MITOCHONDRIAL"/>
    <property type="match status" value="1"/>
</dbReference>
<dbReference type="PANTHER" id="PTHR43766:SF1">
    <property type="entry name" value="TRYPTOPHAN--TRNA LIGASE, MITOCHONDRIAL"/>
    <property type="match status" value="1"/>
</dbReference>
<dbReference type="Pfam" id="PF00579">
    <property type="entry name" value="tRNA-synt_1b"/>
    <property type="match status" value="1"/>
</dbReference>
<dbReference type="PRINTS" id="PR01039">
    <property type="entry name" value="TRNASYNTHTRP"/>
</dbReference>
<dbReference type="SUPFAM" id="SSF52374">
    <property type="entry name" value="Nucleotidylyl transferase"/>
    <property type="match status" value="1"/>
</dbReference>
<dbReference type="PROSITE" id="PS00178">
    <property type="entry name" value="AA_TRNA_LIGASE_I"/>
    <property type="match status" value="1"/>
</dbReference>
<reference key="1">
    <citation type="journal article" date="2002" name="Proc. Natl. Acad. Sci. U.S.A.">
        <title>Genome sequence of a serotype M3 strain of group A Streptococcus: phage-encoded toxins, the high-virulence phenotype, and clone emergence.</title>
        <authorList>
            <person name="Beres S.B."/>
            <person name="Sylva G.L."/>
            <person name="Barbian K.D."/>
            <person name="Lei B."/>
            <person name="Hoff J.S."/>
            <person name="Mammarella N.D."/>
            <person name="Liu M.-Y."/>
            <person name="Smoot J.C."/>
            <person name="Porcella S.F."/>
            <person name="Parkins L.D."/>
            <person name="Campbell D.S."/>
            <person name="Smith T.M."/>
            <person name="McCormick J.K."/>
            <person name="Leung D.Y.M."/>
            <person name="Schlievert P.M."/>
            <person name="Musser J.M."/>
        </authorList>
    </citation>
    <scope>NUCLEOTIDE SEQUENCE [LARGE SCALE GENOMIC DNA]</scope>
    <source>
        <strain>ATCC BAA-595 / MGAS315</strain>
    </source>
</reference>
<gene>
    <name evidence="1" type="primary">trpS</name>
    <name type="ordered locus">SpyM3_1858</name>
</gene>
<comment type="function">
    <text evidence="1">Catalyzes the attachment of tryptophan to tRNA(Trp).</text>
</comment>
<comment type="catalytic activity">
    <reaction evidence="1">
        <text>tRNA(Trp) + L-tryptophan + ATP = L-tryptophyl-tRNA(Trp) + AMP + diphosphate + H(+)</text>
        <dbReference type="Rhea" id="RHEA:24080"/>
        <dbReference type="Rhea" id="RHEA-COMP:9671"/>
        <dbReference type="Rhea" id="RHEA-COMP:9705"/>
        <dbReference type="ChEBI" id="CHEBI:15378"/>
        <dbReference type="ChEBI" id="CHEBI:30616"/>
        <dbReference type="ChEBI" id="CHEBI:33019"/>
        <dbReference type="ChEBI" id="CHEBI:57912"/>
        <dbReference type="ChEBI" id="CHEBI:78442"/>
        <dbReference type="ChEBI" id="CHEBI:78535"/>
        <dbReference type="ChEBI" id="CHEBI:456215"/>
        <dbReference type="EC" id="6.1.1.2"/>
    </reaction>
</comment>
<comment type="subunit">
    <text evidence="1">Homodimer.</text>
</comment>
<comment type="subcellular location">
    <subcellularLocation>
        <location evidence="1">Cytoplasm</location>
    </subcellularLocation>
</comment>
<comment type="similarity">
    <text evidence="1">Belongs to the class-I aminoacyl-tRNA synthetase family.</text>
</comment>
<sequence length="340" mass="38373">MTKPIILTGDRPTGKLHLGHYVGSLKNRVFLQNENKYKMFVFLADQQALTDHAKESELIQESIGNVALDYLSVGLDPKQSTIFIQSQIPELAELSMYYMNLVSLARLERNPTVKTEIAQKGFGESIPSGFLVYPVSQAADITAFKANLVPVGNDQKPMIEQTREIVRSFNHTYHTDCLVEPEGIYPENEKAGRLPGLDGNAKMSKSLGNGIYLSDDADTVRKKVMSMYTDPNHIKIEDPGQIEGNMVFHYLDIFARKEDQADIEAMKEHYQRGGLGDVKTKRYLLDILERELAPIRERRLEYAKDMGEVFRMLQEGSQKARTVAAKTLSEVKSAMGINYF</sequence>
<organism>
    <name type="scientific">Streptococcus pyogenes serotype M3 (strain ATCC BAA-595 / MGAS315)</name>
    <dbReference type="NCBI Taxonomy" id="198466"/>
    <lineage>
        <taxon>Bacteria</taxon>
        <taxon>Bacillati</taxon>
        <taxon>Bacillota</taxon>
        <taxon>Bacilli</taxon>
        <taxon>Lactobacillales</taxon>
        <taxon>Streptococcaceae</taxon>
        <taxon>Streptococcus</taxon>
    </lineage>
</organism>
<protein>
    <recommendedName>
        <fullName evidence="1">Tryptophan--tRNA ligase</fullName>
        <ecNumber evidence="1">6.1.1.2</ecNumber>
    </recommendedName>
    <alternativeName>
        <fullName evidence="1">Tryptophanyl-tRNA synthetase</fullName>
        <shortName evidence="1">TrpRS</shortName>
    </alternativeName>
</protein>
<keyword id="KW-0030">Aminoacyl-tRNA synthetase</keyword>
<keyword id="KW-0067">ATP-binding</keyword>
<keyword id="KW-0963">Cytoplasm</keyword>
<keyword id="KW-0436">Ligase</keyword>
<keyword id="KW-0547">Nucleotide-binding</keyword>
<keyword id="KW-0648">Protein biosynthesis</keyword>
<name>SYW_STRP3</name>